<sequence>MEKVLALLLVTLTVAYAVPDPRGIIINLDEGELCLNSAQCKSNCCQHDTILSLSRCALKARENSECSAFTLYGVYYKCPCERGLTCEGDKSLVGSITNTNFGICHDVGRSSD</sequence>
<feature type="signal peptide" evidence="5">
    <location>
        <begin position="1"/>
        <end position="17"/>
    </location>
</feature>
<feature type="propeptide" id="PRO_0000005702" description="Enterostatin, activation peptide" evidence="4">
    <location>
        <begin position="18"/>
        <end position="22"/>
    </location>
</feature>
<feature type="chain" id="PRO_0000005703" description="Colipase">
    <location>
        <begin position="23"/>
        <end position="112"/>
    </location>
</feature>
<feature type="disulfide bond">
    <location>
        <begin position="34"/>
        <end position="45"/>
    </location>
</feature>
<feature type="disulfide bond">
    <location>
        <begin position="40"/>
        <end position="56"/>
    </location>
</feature>
<feature type="disulfide bond">
    <location>
        <begin position="44"/>
        <end position="78"/>
    </location>
</feature>
<feature type="disulfide bond">
    <location>
        <begin position="66"/>
        <end position="86"/>
    </location>
</feature>
<feature type="disulfide bond">
    <location>
        <begin position="80"/>
        <end position="104"/>
    </location>
</feature>
<feature type="sequence conflict" description="In Ref. 4; AA sequence." evidence="9" ref="4">
    <location>
        <position position="54"/>
    </location>
</feature>
<feature type="sequence conflict" description="In Ref. 4; AA sequence." evidence="9" ref="4">
    <location>
        <position position="67"/>
    </location>
</feature>
<feature type="sequence conflict" description="In Ref. 3; AA sequence and 4; AA sequence." evidence="9" ref="3 4">
    <original>D</original>
    <variation>N</variation>
    <location>
        <position position="106"/>
    </location>
</feature>
<feature type="sequence conflict" description="In Ref. 3; AA sequence." evidence="9" ref="3">
    <original>SD</original>
    <variation>DS</variation>
    <location>
        <begin position="111"/>
        <end position="112"/>
    </location>
</feature>
<feature type="strand" evidence="10">
    <location>
        <begin position="25"/>
        <end position="28"/>
    </location>
</feature>
<feature type="strand" evidence="12">
    <location>
        <begin position="30"/>
        <end position="33"/>
    </location>
</feature>
<feature type="helix" evidence="11">
    <location>
        <begin position="37"/>
        <end position="39"/>
    </location>
</feature>
<feature type="strand" evidence="11">
    <location>
        <begin position="40"/>
        <end position="43"/>
    </location>
</feature>
<feature type="strand" evidence="11">
    <location>
        <begin position="48"/>
        <end position="52"/>
    </location>
</feature>
<feature type="strand" evidence="11">
    <location>
        <begin position="64"/>
        <end position="67"/>
    </location>
</feature>
<feature type="strand" evidence="11">
    <location>
        <begin position="71"/>
        <end position="77"/>
    </location>
</feature>
<feature type="strand" evidence="11">
    <location>
        <begin position="84"/>
        <end position="88"/>
    </location>
</feature>
<feature type="helix" evidence="11">
    <location>
        <begin position="92"/>
        <end position="97"/>
    </location>
</feature>
<feature type="strand" evidence="11">
    <location>
        <begin position="101"/>
        <end position="106"/>
    </location>
</feature>
<keyword id="KW-0002">3D-structure</keyword>
<keyword id="KW-0222">Digestion</keyword>
<keyword id="KW-0903">Direct protein sequencing</keyword>
<keyword id="KW-1015">Disulfide bond</keyword>
<keyword id="KW-0442">Lipid degradation</keyword>
<keyword id="KW-0443">Lipid metabolism</keyword>
<keyword id="KW-1185">Reference proteome</keyword>
<keyword id="KW-0964">Secreted</keyword>
<keyword id="KW-0732">Signal</keyword>
<reference key="1">
    <citation type="journal article" date="1999" name="Eur. J. Biochem.">
        <title>Cloning, sequencing and functional expression of a cDNA encoding porcine pancreatic preprocarboxypeptidase A1.</title>
        <authorList>
            <person name="Darnis S."/>
            <person name="Juge N."/>
            <person name="Marino C."/>
            <person name="Aviles F.X."/>
            <person name="Puigserver A."/>
            <person name="Chaix J.-C."/>
            <person name="Guo X.-J."/>
        </authorList>
    </citation>
    <scope>NUCLEOTIDE SEQUENCE [MRNA]</scope>
    <source>
        <tissue>Pancreas</tissue>
    </source>
</reference>
<reference key="2">
    <citation type="submission" date="2005-05" db="EMBL/GenBank/DDBJ databases">
        <title>Polymorphism of Sus scrofa gene encoding pancreatic colipase.</title>
        <authorList>
            <person name="Pan G."/>
            <person name="Liu Y.G."/>
            <person name="Xiong Y.Z."/>
        </authorList>
    </citation>
    <scope>NUCLEOTIDE SEQUENCE [GENOMIC DNA]</scope>
</reference>
<reference key="3">
    <citation type="journal article" date="1984" name="Biochim. Biophys. Acta">
        <title>The primary sequence of human pancreatic colipase.</title>
        <authorList>
            <person name="Sternby B."/>
            <person name="Engstroem A."/>
            <person name="Hellman U."/>
            <person name="Vihert A.M."/>
            <person name="Sternby N.-H."/>
            <person name="Borgstroem B."/>
        </authorList>
    </citation>
    <scope>PROTEIN SEQUENCE OF 18-112</scope>
</reference>
<reference key="4">
    <citation type="journal article" date="1974" name="Biochim. Biophys. Acta">
        <title>The primary structure of porcine colipase II. I. The amino acid sequence.</title>
        <authorList>
            <person name="Charles M."/>
            <person name="Erlanson C."/>
            <person name="Bianchetta J.D."/>
            <person name="Joffre J."/>
            <person name="Guidoni A.A."/>
            <person name="Rovery M."/>
        </authorList>
    </citation>
    <scope>PROTEIN SEQUENCE OF 23-108</scope>
</reference>
<reference key="5">
    <citation type="journal article" date="1974" name="Biochim. Biophys. Acta">
        <title>The primary structure of porcine colipase II. II. The disulfide bridges.</title>
        <authorList>
            <person name="Erlanson C."/>
            <person name="Charles M."/>
            <person name="Astier M."/>
            <person name="Desnuelle P."/>
        </authorList>
    </citation>
    <scope>DISULFIDE BONDS</scope>
</reference>
<reference key="6">
    <citation type="journal article" date="1992" name="Nature">
        <title>Structure of the pancreatic lipase-procolipase complex.</title>
        <authorList>
            <person name="van Tilbeurgh H."/>
            <person name="Sarda L."/>
            <person name="Verger R."/>
            <person name="Cambillau C."/>
        </authorList>
    </citation>
    <scope>X-RAY CRYSTALLOGRAPHY (3.0 ANGSTROMS) OF 18-112 IN COMPLEX WITH PNLIP</scope>
</reference>
<reference key="7">
    <citation type="journal article" date="1993" name="Nature">
        <title>Interfacial activation of the lipase-procolipase complex by mixed micelles revealed by X-ray crystallography.</title>
        <authorList>
            <person name="van Tilbeurgh H."/>
            <person name="Egloff M.-P."/>
            <person name="Martinez C."/>
            <person name="Rugani N."/>
            <person name="Verger R."/>
            <person name="Cambillau C."/>
        </authorList>
    </citation>
    <scope>X-RAY CRYSTALLOGRAPHY (2.46 ANGSTROMS) OF 18-95 IN COMPLEX WITH PNLIP</scope>
</reference>
<reference key="8">
    <citation type="journal article" date="1995" name="Protein Sci.">
        <title>Crystallographic study of the structure of colipase and of the interaction with pancreatic lipase.</title>
        <authorList>
            <person name="Egloff M.-P."/>
            <person name="Sarda L."/>
            <person name="Verger R."/>
            <person name="Cambillau C."/>
            <person name="van Tilbeurgh H."/>
        </authorList>
    </citation>
    <scope>X-RAY CRYSTALLOGRAPHY (2.4 ANGSTROMS) OF 18-95 IN COMPLEX WITH PNLIP</scope>
    <scope>DISULFIDE BONDS</scope>
</reference>
<reference key="9">
    <citation type="journal article" date="1996" name="J. Biol. Chem.">
        <title>Lipase activation by nonionic detergents. The crystal structure of the porcine lipase-colipase-tetraethylene glycol monooctyl ether complex.</title>
        <authorList>
            <person name="Hermoso J."/>
            <person name="Pignol D."/>
            <person name="Kerfelec B."/>
            <person name="Crenon I."/>
            <person name="Chapus C."/>
            <person name="Fontecilla-Camps J.-C."/>
        </authorList>
    </citation>
    <scope>X-RAY CRYSTALLOGRAPHY (2.8 ANGSTROMS) OF 18-95 IN COMPLEX WITH PNLIP</scope>
</reference>
<reference key="10">
    <citation type="journal article" date="1995" name="Eur. J. Biochem.">
        <title>Solution structure of porcine pancreatic procolipase as determined from 1H homonuclear two-dimensional and three-dimensional NMR.</title>
        <authorList>
            <person name="Breg J.N."/>
            <person name="Sarda L."/>
            <person name="Cozzone P.J."/>
            <person name="Rugani N."/>
            <person name="Boelens R."/>
            <person name="Kaptein R."/>
        </authorList>
    </citation>
    <scope>STRUCTURE BY NMR OF 18-110</scope>
    <scope>SEQUENCE REVISION TO 54</scope>
</reference>
<accession>P02703</accession>
<accession>Q3I5G6</accession>
<accession>Q9N1T6</accession>
<gene>
    <name type="primary">CLPS</name>
</gene>
<evidence type="ECO:0000250" key="1">
    <source>
        <dbReference type="UniProtKB" id="P04118"/>
    </source>
</evidence>
<evidence type="ECO:0000255" key="2">
    <source>
        <dbReference type="PROSITE-ProRule" id="PRU00674"/>
    </source>
</evidence>
<evidence type="ECO:0000269" key="3">
    <source>
    </source>
</evidence>
<evidence type="ECO:0000269" key="4">
    <source>
    </source>
</evidence>
<evidence type="ECO:0000269" key="5">
    <source>
    </source>
</evidence>
<evidence type="ECO:0000269" key="6">
    <source>
    </source>
</evidence>
<evidence type="ECO:0000269" key="7">
    <source>
    </source>
</evidence>
<evidence type="ECO:0000269" key="8">
    <source>
    </source>
</evidence>
<evidence type="ECO:0000305" key="9"/>
<evidence type="ECO:0007829" key="10">
    <source>
        <dbReference type="PDB" id="1ETH"/>
    </source>
</evidence>
<evidence type="ECO:0007829" key="11">
    <source>
        <dbReference type="PDB" id="1LPB"/>
    </source>
</evidence>
<evidence type="ECO:0007829" key="12">
    <source>
        <dbReference type="PDB" id="1PCN"/>
    </source>
</evidence>
<organism>
    <name type="scientific">Sus scrofa</name>
    <name type="common">Pig</name>
    <dbReference type="NCBI Taxonomy" id="9823"/>
    <lineage>
        <taxon>Eukaryota</taxon>
        <taxon>Metazoa</taxon>
        <taxon>Chordata</taxon>
        <taxon>Craniata</taxon>
        <taxon>Vertebrata</taxon>
        <taxon>Euteleostomi</taxon>
        <taxon>Mammalia</taxon>
        <taxon>Eutheria</taxon>
        <taxon>Laurasiatheria</taxon>
        <taxon>Artiodactyla</taxon>
        <taxon>Suina</taxon>
        <taxon>Suidae</taxon>
        <taxon>Sus</taxon>
    </lineage>
</organism>
<comment type="function">
    <text evidence="1">Colipase is a cofactor of pancreatic lipase. It allows the lipase to anchor itself to the lipid-water interface. Without colipase the enzyme is washed off by bile salts, which have an inhibitory effect on the lipase.</text>
</comment>
<comment type="function">
    <text evidence="1">Enterostatin has a biological activity as a satiety signal.</text>
</comment>
<comment type="subunit">
    <text evidence="2 3 6 7 8">Forms a 1:1 stoichiometric complex with pancreatic lipase.</text>
</comment>
<comment type="subcellular location">
    <subcellularLocation>
        <location>Secreted</location>
    </subcellularLocation>
</comment>
<comment type="tissue specificity">
    <text>Expressed by the pancreas.</text>
</comment>
<comment type="similarity">
    <text evidence="2">Belongs to the colipase family.</text>
</comment>
<proteinExistence type="evidence at protein level"/>
<protein>
    <recommendedName>
        <fullName>Colipase</fullName>
    </recommendedName>
    <alternativeName>
        <fullName>Procolipase II</fullName>
    </alternativeName>
</protein>
<dbReference type="EMBL" id="AF148567">
    <property type="protein sequence ID" value="AAF67823.1"/>
    <property type="molecule type" value="mRNA"/>
</dbReference>
<dbReference type="EMBL" id="DQ073448">
    <property type="protein sequence ID" value="AAZ22441.1"/>
    <property type="molecule type" value="Genomic_DNA"/>
</dbReference>
<dbReference type="PIR" id="A03162">
    <property type="entry name" value="XLPG2"/>
</dbReference>
<dbReference type="RefSeq" id="NP_999368.1">
    <property type="nucleotide sequence ID" value="NM_214203.1"/>
</dbReference>
<dbReference type="RefSeq" id="XP_013833274.1">
    <property type="nucleotide sequence ID" value="XM_013977820.1"/>
</dbReference>
<dbReference type="RefSeq" id="XP_013833275.1">
    <property type="nucleotide sequence ID" value="XM_013977821.1"/>
</dbReference>
<dbReference type="RefSeq" id="XP_013833276.1">
    <property type="nucleotide sequence ID" value="XM_013977822.1"/>
</dbReference>
<dbReference type="PDB" id="1ETH">
    <property type="method" value="X-ray"/>
    <property type="resolution" value="2.80 A"/>
    <property type="chains" value="B/D=18-110"/>
</dbReference>
<dbReference type="PDB" id="1LPA">
    <property type="method" value="X-ray"/>
    <property type="resolution" value="3.04 A"/>
    <property type="chains" value="A=18-110"/>
</dbReference>
<dbReference type="PDB" id="1LPB">
    <property type="method" value="X-ray"/>
    <property type="resolution" value="2.46 A"/>
    <property type="chains" value="A=18-110"/>
</dbReference>
<dbReference type="PDB" id="1N8S">
    <property type="method" value="X-ray"/>
    <property type="resolution" value="3.04 A"/>
    <property type="chains" value="C=18-110"/>
</dbReference>
<dbReference type="PDB" id="1PCN">
    <property type="method" value="NMR"/>
    <property type="chains" value="A=18-110"/>
</dbReference>
<dbReference type="PDB" id="1PCO">
    <property type="method" value="NMR"/>
    <property type="chains" value="A=18-110"/>
</dbReference>
<dbReference type="PDBsum" id="1ETH"/>
<dbReference type="PDBsum" id="1LPA"/>
<dbReference type="PDBsum" id="1LPB"/>
<dbReference type="PDBsum" id="1N8S"/>
<dbReference type="PDBsum" id="1PCN"/>
<dbReference type="PDBsum" id="1PCO"/>
<dbReference type="SMR" id="P02703"/>
<dbReference type="CORUM" id="P02703"/>
<dbReference type="FunCoup" id="P02703">
    <property type="interactions" value="124"/>
</dbReference>
<dbReference type="MINT" id="P02703"/>
<dbReference type="STRING" id="9823.ENSSSCP00000001686"/>
<dbReference type="PaxDb" id="9823-ENSSSCP00000001686"/>
<dbReference type="Ensembl" id="ENSSSCT00000001730.5">
    <property type="protein sequence ID" value="ENSSSCP00000001686.2"/>
    <property type="gene ID" value="ENSSSCG00000001552.5"/>
</dbReference>
<dbReference type="Ensembl" id="ENSSSCT00015055872.1">
    <property type="protein sequence ID" value="ENSSSCP00015022451.1"/>
    <property type="gene ID" value="ENSSSCG00015041628.1"/>
</dbReference>
<dbReference type="Ensembl" id="ENSSSCT00025057466.1">
    <property type="protein sequence ID" value="ENSSSCP00025024313.1"/>
    <property type="gene ID" value="ENSSSCG00025042417.1"/>
</dbReference>
<dbReference type="Ensembl" id="ENSSSCT00030103441.1">
    <property type="protein sequence ID" value="ENSSSCP00030047770.1"/>
    <property type="gene ID" value="ENSSSCG00030073834.1"/>
</dbReference>
<dbReference type="Ensembl" id="ENSSSCT00035023368.1">
    <property type="protein sequence ID" value="ENSSSCP00035008701.1"/>
    <property type="gene ID" value="ENSSSCG00035018119.1"/>
</dbReference>
<dbReference type="Ensembl" id="ENSSSCT00040013803.1">
    <property type="protein sequence ID" value="ENSSSCP00040005296.1"/>
    <property type="gene ID" value="ENSSSCG00040010604.1"/>
</dbReference>
<dbReference type="Ensembl" id="ENSSSCT00045061123.1">
    <property type="protein sequence ID" value="ENSSSCP00045042936.1"/>
    <property type="gene ID" value="ENSSSCG00045035599.1"/>
</dbReference>
<dbReference type="Ensembl" id="ENSSSCT00050083332.1">
    <property type="protein sequence ID" value="ENSSSCP00050035785.1"/>
    <property type="gene ID" value="ENSSSCG00050061146.1"/>
</dbReference>
<dbReference type="Ensembl" id="ENSSSCT00055024958.1">
    <property type="protein sequence ID" value="ENSSSCP00055019814.1"/>
    <property type="gene ID" value="ENSSSCG00055012669.1"/>
</dbReference>
<dbReference type="Ensembl" id="ENSSSCT00060107621.1">
    <property type="protein sequence ID" value="ENSSSCP00060047727.1"/>
    <property type="gene ID" value="ENSSSCG00060078045.1"/>
</dbReference>
<dbReference type="Ensembl" id="ENSSSCT00065052211.1">
    <property type="protein sequence ID" value="ENSSSCP00065022705.1"/>
    <property type="gene ID" value="ENSSSCG00065038190.1"/>
</dbReference>
<dbReference type="Ensembl" id="ENSSSCT00070009061.1">
    <property type="protein sequence ID" value="ENSSSCP00070007439.1"/>
    <property type="gene ID" value="ENSSSCG00070004798.1"/>
</dbReference>
<dbReference type="Ensembl" id="ENSSSCT00085039000">
    <property type="protein sequence ID" value="ENSSSCP00085027158"/>
    <property type="gene ID" value="ENSSSCG00085020433"/>
</dbReference>
<dbReference type="Ensembl" id="ENSSSCT00090014053">
    <property type="protein sequence ID" value="ENSSSCP00090008903"/>
    <property type="gene ID" value="ENSSSCG00090007898"/>
</dbReference>
<dbReference type="Ensembl" id="ENSSSCT00105007278">
    <property type="protein sequence ID" value="ENSSSCP00105005190"/>
    <property type="gene ID" value="ENSSSCG00105003713"/>
</dbReference>
<dbReference type="Ensembl" id="ENSSSCT00110067336">
    <property type="protein sequence ID" value="ENSSSCP00110047549"/>
    <property type="gene ID" value="ENSSSCG00110035370"/>
</dbReference>
<dbReference type="Ensembl" id="ENSSSCT00115018275">
    <property type="protein sequence ID" value="ENSSSCP00115017265"/>
    <property type="gene ID" value="ENSSSCG00115010604"/>
</dbReference>
<dbReference type="Ensembl" id="ENSSSCT00130069188">
    <property type="protein sequence ID" value="ENSSSCP00130049755"/>
    <property type="gene ID" value="ENSSSCG00130035391"/>
</dbReference>
<dbReference type="GeneID" id="397407"/>
<dbReference type="KEGG" id="ssc:397407"/>
<dbReference type="CTD" id="1208"/>
<dbReference type="VGNC" id="VGNC:103927">
    <property type="gene designation" value="CLPS"/>
</dbReference>
<dbReference type="eggNOG" id="ENOG502S4NY">
    <property type="taxonomic scope" value="Eukaryota"/>
</dbReference>
<dbReference type="GeneTree" id="ENSGT00390000012644"/>
<dbReference type="HOGENOM" id="CLU_165591_0_0_1"/>
<dbReference type="InParanoid" id="P02703"/>
<dbReference type="OMA" id="CSPKTLY"/>
<dbReference type="OrthoDB" id="9826993at2759"/>
<dbReference type="TreeFam" id="TF336178"/>
<dbReference type="Reactome" id="R-SSC-192456">
    <property type="pathway name" value="Digestion of dietary lipid"/>
</dbReference>
<dbReference type="Reactome" id="R-SSC-975634">
    <property type="pathway name" value="Retinoid metabolism and transport"/>
</dbReference>
<dbReference type="EvolutionaryTrace" id="P02703"/>
<dbReference type="Proteomes" id="UP000008227">
    <property type="component" value="Chromosome 7"/>
</dbReference>
<dbReference type="Proteomes" id="UP000314985">
    <property type="component" value="Chromosome 7"/>
</dbReference>
<dbReference type="Proteomes" id="UP000694570">
    <property type="component" value="Unplaced"/>
</dbReference>
<dbReference type="Proteomes" id="UP000694571">
    <property type="component" value="Unplaced"/>
</dbReference>
<dbReference type="Proteomes" id="UP000694720">
    <property type="component" value="Unplaced"/>
</dbReference>
<dbReference type="Proteomes" id="UP000694722">
    <property type="component" value="Unplaced"/>
</dbReference>
<dbReference type="Proteomes" id="UP000694723">
    <property type="component" value="Unplaced"/>
</dbReference>
<dbReference type="Proteomes" id="UP000694724">
    <property type="component" value="Unplaced"/>
</dbReference>
<dbReference type="Proteomes" id="UP000694725">
    <property type="component" value="Unplaced"/>
</dbReference>
<dbReference type="Proteomes" id="UP000694726">
    <property type="component" value="Unplaced"/>
</dbReference>
<dbReference type="Proteomes" id="UP000694727">
    <property type="component" value="Unplaced"/>
</dbReference>
<dbReference type="Proteomes" id="UP000694728">
    <property type="component" value="Unplaced"/>
</dbReference>
<dbReference type="Bgee" id="ENSSSCG00000001552">
    <property type="expression patterns" value="Expressed in oocyte and 7 other cell types or tissues"/>
</dbReference>
<dbReference type="ExpressionAtlas" id="P02703">
    <property type="expression patterns" value="baseline"/>
</dbReference>
<dbReference type="GO" id="GO:0005576">
    <property type="term" value="C:extracellular region"/>
    <property type="evidence" value="ECO:0007669"/>
    <property type="project" value="UniProtKB-SubCell"/>
</dbReference>
<dbReference type="GO" id="GO:0008047">
    <property type="term" value="F:enzyme activator activity"/>
    <property type="evidence" value="ECO:0007669"/>
    <property type="project" value="Ensembl"/>
</dbReference>
<dbReference type="GO" id="GO:0035473">
    <property type="term" value="F:lipase binding"/>
    <property type="evidence" value="ECO:0007669"/>
    <property type="project" value="InterPro"/>
</dbReference>
<dbReference type="GO" id="GO:0007586">
    <property type="term" value="P:digestion"/>
    <property type="evidence" value="ECO:0007669"/>
    <property type="project" value="UniProtKB-KW"/>
</dbReference>
<dbReference type="GO" id="GO:0016042">
    <property type="term" value="P:lipid catabolic process"/>
    <property type="evidence" value="ECO:0007669"/>
    <property type="project" value="UniProtKB-KW"/>
</dbReference>
<dbReference type="GO" id="GO:0009617">
    <property type="term" value="P:response to bacterium"/>
    <property type="evidence" value="ECO:0007669"/>
    <property type="project" value="Ensembl"/>
</dbReference>
<dbReference type="GO" id="GO:0032094">
    <property type="term" value="P:response to food"/>
    <property type="evidence" value="ECO:0000318"/>
    <property type="project" value="GO_Central"/>
</dbReference>
<dbReference type="GO" id="GO:0001523">
    <property type="term" value="P:retinoid metabolic process"/>
    <property type="evidence" value="ECO:0007669"/>
    <property type="project" value="Ensembl"/>
</dbReference>
<dbReference type="CDD" id="cd23011">
    <property type="entry name" value="CLPS"/>
    <property type="match status" value="1"/>
</dbReference>
<dbReference type="FunFam" id="2.10.80.10:FF:000005">
    <property type="entry name" value="Colipase"/>
    <property type="match status" value="1"/>
</dbReference>
<dbReference type="Gene3D" id="2.10.80.10">
    <property type="entry name" value="Lipase, subunit A"/>
    <property type="match status" value="1"/>
</dbReference>
<dbReference type="InterPro" id="IPR047576">
    <property type="entry name" value="CLPS_chr"/>
</dbReference>
<dbReference type="InterPro" id="IPR001981">
    <property type="entry name" value="Colipase"/>
</dbReference>
<dbReference type="InterPro" id="IPR017914">
    <property type="entry name" value="Colipase_C"/>
</dbReference>
<dbReference type="InterPro" id="IPR017915">
    <property type="entry name" value="Colipase_CS"/>
</dbReference>
<dbReference type="InterPro" id="IPR017913">
    <property type="entry name" value="Colipase_N"/>
</dbReference>
<dbReference type="PANTHER" id="PTHR10041">
    <property type="entry name" value="COLIPASE"/>
    <property type="match status" value="1"/>
</dbReference>
<dbReference type="PANTHER" id="PTHR10041:SF8">
    <property type="entry name" value="COLIPASE"/>
    <property type="match status" value="1"/>
</dbReference>
<dbReference type="Pfam" id="PF01114">
    <property type="entry name" value="Colipase"/>
    <property type="match status" value="1"/>
</dbReference>
<dbReference type="Pfam" id="PF02740">
    <property type="entry name" value="Colipase_C"/>
    <property type="match status" value="1"/>
</dbReference>
<dbReference type="PRINTS" id="PR00128">
    <property type="entry name" value="COLIPASE"/>
</dbReference>
<dbReference type="SMART" id="SM00023">
    <property type="entry name" value="COLIPASE"/>
    <property type="match status" value="1"/>
</dbReference>
<dbReference type="SUPFAM" id="SSF57190">
    <property type="entry name" value="Colipase-like"/>
    <property type="match status" value="2"/>
</dbReference>
<dbReference type="PROSITE" id="PS00121">
    <property type="entry name" value="COLIPASE_1"/>
    <property type="match status" value="1"/>
</dbReference>
<dbReference type="PROSITE" id="PS51342">
    <property type="entry name" value="COLIPASE_2"/>
    <property type="match status" value="1"/>
</dbReference>
<name>COL_PIG</name>